<sequence>MAFSCGTLSYSAVAQAPSVAYAPRTWEVDEARRRRVIKRLALEQERIRNVLDVAVYDQATWEQEDARDNEFLTEQLNNLYTIYSIAERCTRRPIKEXSPISVSNRFAPLESLKVEVGQEAXECXFKKPKYTRXCKKVKRVATRFVREKVVRPMCSRSPMLLFKLKKIIYDLHLYRLRKQIRMLRRQKQRDYELECVTNLLQLSNPVQAKPEMDNPNPGPDGEGEVELEKDSNVVLTTQRDPSTSIPAPVSVKWSRWTSNDVVDDYATITSRWYQIAEFVWSKDDPFDKELARLILPRALLSSIEANSDAICDVPNTIPFKVHAYWRGDMEVRVQINSNKFQVGQLQATWYYSDHENLNISSKRSVYGFSQMDHALISASASNEAKLVIPYKHVYPFLPTRIVPDWTTGILDMGALNIRVIAPLRMSATGPTTCNVVVFIKLNNSEFTGTSSGKFYASQIRAKPEMDRILNLAEGLLNNTIGGNNMDNPSYQQSPRHFVPTGMHSLALGTNLVEPLHALRLDAAGTTQHPVGCAPDEDMTVSSIASRYGLIRRVQWKKDHAKGSLLLQLDADPFVEQRIEGTNPISLYWFAPVGVVSSMFMQWRGSLEYRFDIIASQFHTGRLIVGYVPGLTASLQLQMDYMKLKSSSYVVFDLQESNSFTFEVPYVSYRPWWVRKYGGNYLPSSTDAPSTLFMYVQVPLIPMEAVSDTIDINVYVRGGSSFEVCVPVQPSLGLNWNTDFILRNDEEYRAKTGYAPYYAGVWHSFNNSNSLVFRWGSXSDQIAQWPTISVPRGELAFLRIKDGKQAAVGTQPWRTMVVWPSGHGYNIGIPTYNAERARQLAQHLYGGGSLTDEKAKQLFVPANQQGPGKVSNGNPVWEVMRAPLATQRAHIQDFEFIEAIPEGEESRNTTVLDTTTTLQSSGFGRAFFGEAFNDLKTLMRRYQLYGQLLLSVTTDKDIDHCMFTFPCLPQGLALDIGSAGSPHEIFNRCRDGIIPLIASGYRFYRGDLRYKIVFPSNVNSNIWVQHRPDRRLEGWSAAKIVNCDAVSTGQGVYNHGYASHIQITRVNNVIELEVPFYNATCYNYLQAFNASSAASSYAVSLGEISVGFQATSDDIASIVNKPVTIYYSIGDGMQFSQWVGYQPMMILDQLPAPVVRAVPEGPIAKIKNFFHQTADEVREAQAAKMREDMGMVVQDVIGELSQAIPDLQQPEVQANVFSLVSQLVHAIIGTSLKTVAWAIVSIFVTLGLIGREMMHSVITVVKRLLEKYHLATQPQESASSSTVISAVPEAPNAEAEEASAWVSIIYNGVCNMLNVAAQKPKQFKDWVKLATVDFSNNCRGSNQVFVFFKNTFEVLKKMWGYVFCQSNPAARLLKAVNDEPEILKAWVKECLYLDDPKFRMRRAHDQEYIERVFAAHSYGQILLHDLTAEMNQSRNLSVFTRVYDQISKLKTDLMEMGSNPYIRRECFTICMCGASGIGKSYLTDSLCSELLRASRTPVTTGIKCVVNPLSDYWDQCDFQPVLCVDDMWSVETSTTLDKQLNMLFQVHSPIVLSPPKADLEGKKMRYNPEIFIYNTNKPFPRFDRIAMEAIYRRRNVLIECKASEEKKRGCKHCENDIPIAECSPKMLKDFHHIKFRYAHDVCNSETTWSEWMTYNEFLEWITPVYMANRRKANESFKMRVDEMQMLRMDEPLEGDNILNKYVEVNQRLVEEMKAFKERTLWSDLHRVGAEISASVKKALPTISITEKLPHWTVQCGIAKPEMDHAYEVMSSYAAGMNAEIEAHEQVRRSSVECQFAEPQAXRNPDDEGPTIDEELMGDTEFTSQALERLVDEGYITGKQKKYIAMWCSKRREHTADFDLVWTDNLRVLSAYVHERSSSTRLSTDDVKLYKTISMLHQKYDTTECAKCQHWYAPLTDIYVDDKKLFWCQKEKKTLIDVRKLSKEDVTVQSKLXNLSVPCGEVCMLHSKYFNYLFHKAWLFENPTWRLIYNGTKKGMPEYFMNCVDEISLDSKFGKVKVWLQAIIDKYLTRPVKMIRDFLFKWWPQVAYVLSLLGIIGITAYEMRNPKPTSEELADHYVNRHCSSDFWSPGLASPQGLKYSEAVTVKAPRIHRLPVTTKPQGSTQQVDAAVNKILQNMVYIGVVFPKVPGSKWRDINFRCLMLHNRQCLMLRHYIESTAAFPEGTKYYFKYIHNQETRMSGDISGIEIDLLNLPRLYYGGLAGEESFDSNIVLVTMPNRIPECKSIIKFIASHNEHIRAQNDGVLVTGDHTQLLAFENNNKTPISINADGLYEVILQGVYTYPYHGDGVCGSILLSRNLQRPIIGIHVAGTEGLHGFGVAEPLVHEMFTGKAIESEREPYDRVYELPLRELDESDIGLDTDLYPIGRVDAKLAHAQSPSTGIKKTLIHGTFDVRTEPNPMSSRDPRIAPHDPLKLGCEKHGMPCSPFNRKHLELATNHLKEKLVSVVKPINGCKIRSLQDAXCGVPGLDGFDSISWNTSAGFPLSSLKPPGTSGKRWLFDIELQDSGCYLLRGMRPELEIQLSTTQLMRKKGIKPHTIFTDCLKDTCLPVEKCRIPGKTRIFSISPVQFTIPFRQYYLDFMASYRAARLNAEHGIGIDVNSLEWTNLATRLSKXGTHIVTGDYKNFGPGLDSDVAASAFEIIIDWVLHYTEEDNKDEMKRVMWTMAQEILAPSHLYRDLVYRVPCGIPSGSPITDILNTISNCLLIRLAWLGITDLPLSEFSQNVVLVCYGDDLIMNVSDNMIDKFNAVTIGKFFSQYKMEFTDQDKSGNTVKWRTLQTATFLKHGFLKHPTRPVFLANLDKVSVEGTTNWTHARGLGRRTATIENAKQALELAFGWGPEYFNYVRNTIKMAFDKLGIYEDLITWEEMDVRCYASA</sequence>
<protein>
    <recommendedName>
        <fullName>Genome polyprotein</fullName>
    </recommendedName>
    <component>
        <recommendedName>
            <fullName>Putative leader protein</fullName>
            <shortName>L-protein</shortName>
        </recommendedName>
    </component>
    <component>
        <recommendedName>
            <fullName>Capsid protein VP2</fullName>
        </recommendedName>
    </component>
    <component>
        <recommendedName>
            <fullName evidence="11">Putative capsid protein VP4</fullName>
        </recommendedName>
    </component>
    <component>
        <recommendedName>
            <fullName>Capsid protein VP3</fullName>
        </recommendedName>
    </component>
    <component>
        <recommendedName>
            <fullName>Capsid protein VP1</fullName>
        </recommendedName>
    </component>
    <component>
        <recommendedName>
            <fullName evidence="10">Putative protein 2A-like</fullName>
        </recommendedName>
    </component>
    <component>
        <recommendedName>
            <fullName>Helicase</fullName>
            <ecNumber>3.6.4.13</ecNumber>
        </recommendedName>
    </component>
    <component>
        <recommendedName>
            <fullName evidence="4">3C-like protease</fullName>
            <shortName>3CL-PRO</shortName>
            <ecNumber evidence="4">3.4.22.-</ecNumber>
        </recommendedName>
    </component>
    <component>
        <recommendedName>
            <fullName evidence="2">RNA-directed RNA polymerase</fullName>
            <ecNumber evidence="2">2.7.7.48</ecNumber>
        </recommendedName>
    </component>
</protein>
<accession>Q8B3M2</accession>
<comment type="function">
    <molecule>Capsid protein VP2</molecule>
    <text evidence="7">Capsid protein that assembles with the capsid proteins VP1 and VP3 to form a pseudo-T3 icosahedral capsid of about 40 nm.</text>
</comment>
<comment type="function">
    <molecule>Capsid protein VP3</molecule>
    <text evidence="7">Capsid protein that assembles with the capsid proteins VP1 and VP2 to form a pseudo T3 icosahedral capsid of about 40 nm.</text>
</comment>
<comment type="function">
    <molecule>Capsid protein VP1</molecule>
    <text evidence="7">Capsid protein that assembles with the capsid proteins VP2 and VP3 to form a pseudo T3 icosahedral capsid of about 40 nm.</text>
</comment>
<comment type="function">
    <molecule>Helicase</molecule>
    <text evidence="1">Displays RNA helix destabilizing and strand annealing acceleration activity. This activity is necessary at several points during genome replication, for example to separate duplexes that form after genome replication.</text>
</comment>
<comment type="function">
    <molecule>3C-like protease</molecule>
    <text evidence="9">Cysteine protease that generates mature viral proteins from the precursor polyprotein.</text>
</comment>
<comment type="function">
    <molecule>RNA-directed RNA polymerase</molecule>
    <text evidence="1">Replicates genomic and antigenomic RNA.</text>
</comment>
<comment type="catalytic activity">
    <molecule>RNA-directed RNA polymerase</molecule>
    <reaction evidence="2">
        <text>RNA(n) + a ribonucleoside 5'-triphosphate = RNA(n+1) + diphosphate</text>
        <dbReference type="Rhea" id="RHEA:21248"/>
        <dbReference type="Rhea" id="RHEA-COMP:14527"/>
        <dbReference type="Rhea" id="RHEA-COMP:17342"/>
        <dbReference type="ChEBI" id="CHEBI:33019"/>
        <dbReference type="ChEBI" id="CHEBI:61557"/>
        <dbReference type="ChEBI" id="CHEBI:140395"/>
        <dbReference type="EC" id="2.7.7.48"/>
    </reaction>
</comment>
<comment type="catalytic activity">
    <molecule>Helicase</molecule>
    <reaction evidence="1">
        <text>ATP + H2O = ADP + phosphate + H(+)</text>
        <dbReference type="Rhea" id="RHEA:13065"/>
        <dbReference type="ChEBI" id="CHEBI:15377"/>
        <dbReference type="ChEBI" id="CHEBI:15378"/>
        <dbReference type="ChEBI" id="CHEBI:30616"/>
        <dbReference type="ChEBI" id="CHEBI:43474"/>
        <dbReference type="ChEBI" id="CHEBI:456216"/>
        <dbReference type="EC" id="3.6.4.13"/>
    </reaction>
</comment>
<comment type="activity regulation">
    <text evidence="9">Inhibited by Rupintrivir.</text>
</comment>
<comment type="biophysicochemical properties">
    <molecule>3C-like protease</molecule>
    <kinetics>
        <KM evidence="9">4.2 uM for a 15 AA peptide</KM>
    </kinetics>
</comment>
<comment type="subcellular location">
    <molecule>Capsid protein VP2</molecule>
    <subcellularLocation>
        <location evidence="7">Virion</location>
    </subcellularLocation>
</comment>
<comment type="subcellular location">
    <molecule>Capsid protein VP3</molecule>
    <subcellularLocation>
        <location evidence="7">Virion</location>
    </subcellularLocation>
</comment>
<comment type="subcellular location">
    <molecule>Capsid protein VP1</molecule>
    <subcellularLocation>
        <location evidence="7">Virion</location>
    </subcellularLocation>
</comment>
<comment type="domain">
    <molecule>Capsid protein VP3</molecule>
    <text evidence="7">The C-terminus forms a P globular domain positioned on the virion surface.</text>
</comment>
<comment type="PTM">
    <molecule>Genome polyprotein</molecule>
    <text evidence="8 9">Specific enzymatic cleavages in vivo by the viral 3C-like protease yield three mature proteins (PubMed:35575593, PubMed:38140585). 3C-like protease is cleaved autocatalytically (PubMed:38140585).</text>
</comment>
<name>POLG_DWV</name>
<feature type="chain" id="PRO_0000460700" description="Genome polyprotein">
    <location>
        <begin position="1"/>
        <end position="2893"/>
    </location>
</feature>
<feature type="chain" id="PRO_0000460701" description="Putative leader protein">
    <location>
        <begin position="1"/>
        <end position="211"/>
    </location>
</feature>
<feature type="chain" id="PRO_0000460702" description="Capsid protein VP2">
    <location>
        <begin position="212"/>
        <end position="464"/>
    </location>
</feature>
<feature type="chain" id="PRO_0000460703" description="Putative capsid protein VP4">
    <location>
        <begin position="465"/>
        <end position="485"/>
    </location>
</feature>
<feature type="chain" id="PRO_0000460704" description="Capsid protein VP3">
    <location>
        <begin position="486"/>
        <end position="901"/>
    </location>
</feature>
<feature type="chain" id="PRO_0000460705" description="Capsid protein VP1">
    <location>
        <begin position="902"/>
        <end position="1159"/>
    </location>
</feature>
<feature type="chain" id="PRO_0000460706" description="Putative protein 2A-like">
    <location>
        <begin position="1160"/>
        <end position="1287"/>
    </location>
</feature>
<feature type="chain" id="PRO_0000460707" description="Helicase">
    <location>
        <begin position="1288"/>
        <end position="1760"/>
    </location>
</feature>
<feature type="chain" id="PRO_0000460708" description="3C-like protease">
    <location>
        <begin position="2118"/>
        <end position="2393"/>
    </location>
</feature>
<feature type="chain" id="PRO_0000460709" description="RNA-directed RNA polymerase">
    <location>
        <begin position="2394"/>
        <end position="2893"/>
    </location>
</feature>
<feature type="domain" description="SF3 helicase" evidence="3">
    <location>
        <begin position="1446"/>
        <end position="1612"/>
    </location>
</feature>
<feature type="domain" description="Peptidase C3" evidence="4">
    <location>
        <begin position="2119"/>
        <end position="2345"/>
    </location>
</feature>
<feature type="domain" description="RdRp catalytic" evidence="2">
    <location>
        <begin position="2633"/>
        <end position="2763"/>
    </location>
</feature>
<feature type="region of interest" description="Disordered" evidence="5">
    <location>
        <begin position="206"/>
        <end position="226"/>
    </location>
</feature>
<feature type="active site" description="For 3C-like protease activity" evidence="4 9">
    <location>
        <position position="2170"/>
    </location>
</feature>
<feature type="active site" description="For 3C-like protease activity" evidence="9">
    <location>
        <position position="2227"/>
    </location>
</feature>
<feature type="active site" description="For 3C-like protease activity" evidence="4 9">
    <location>
        <position position="2307"/>
    </location>
</feature>
<feature type="binding site" evidence="3">
    <location>
        <begin position="1472"/>
        <end position="1479"/>
    </location>
    <ligand>
        <name>ATP</name>
        <dbReference type="ChEBI" id="CHEBI:30616"/>
    </ligand>
</feature>
<feature type="site" description="Cleavage; by 3C-like protease" evidence="6">
    <location>
        <begin position="211"/>
        <end position="212"/>
    </location>
</feature>
<feature type="site" description="Cleavage; by 3C-like protease" evidence="12">
    <location>
        <begin position="464"/>
        <end position="465"/>
    </location>
</feature>
<feature type="site" description="Cleavage" evidence="12">
    <location>
        <begin position="485"/>
        <end position="486"/>
    </location>
</feature>
<feature type="site" description="Cleavage; by 3C-like protease" evidence="12">
    <location>
        <begin position="901"/>
        <end position="902"/>
    </location>
</feature>
<feature type="site" description="Cleavage; by 3C-like protease" evidence="12">
    <location>
        <begin position="1159"/>
        <end position="1160"/>
    </location>
</feature>
<feature type="site" description="Cleavage; by 3C-like protease" evidence="12">
    <location>
        <begin position="1288"/>
        <end position="1289"/>
    </location>
</feature>
<feature type="site" description="Cleavage; by 3C-like protease" evidence="12">
    <location>
        <begin position="1760"/>
        <end position="1761"/>
    </location>
</feature>
<feature type="site" description="Cleavage; by autolysis" evidence="9">
    <location>
        <begin position="2118"/>
        <end position="2119"/>
    </location>
</feature>
<feature type="site" description="Cleavage; by autolysis" evidence="9">
    <location>
        <begin position="2393"/>
        <end position="2394"/>
    </location>
</feature>
<feature type="mutagenesis site" description="Complete loss of proteolytic processing at this site." evidence="9">
    <original>Q</original>
    <variation>A</variation>
    <location>
        <position position="2118"/>
    </location>
</feature>
<feature type="mutagenesis site" description="Complete loss of 3C-like protease activity. No expression of viral proteins." evidence="8">
    <original>H</original>
    <variation>A</variation>
    <location>
        <position position="2170"/>
    </location>
</feature>
<feature type="mutagenesis site" description="No effect on 3C-like protease activity." evidence="8">
    <original>H</original>
    <variation>A</variation>
    <location>
        <position position="2190"/>
    </location>
</feature>
<feature type="mutagenesis site" description="Complete loss of 3C-like protease activity. No expression of viral proteins." evidence="8">
    <original>N</original>
    <variation>A</variation>
    <location>
        <position position="2227"/>
    </location>
</feature>
<feature type="mutagenesis site" description="Complete loss of 3C-like protease activity. Complete loss of production of new infectious virions." evidence="8 9">
    <original>C</original>
    <variation>A</variation>
    <location>
        <position position="2307"/>
    </location>
</feature>
<feature type="mutagenesis site" description="Complete loss of proteolytic processing at this site. Complete loss of production of new infectious virions." evidence="9">
    <original>Q</original>
    <variation>A</variation>
    <location>
        <position position="2393"/>
    </location>
</feature>
<feature type="strand" evidence="18">
    <location>
        <begin position="221"/>
        <end position="223"/>
    </location>
</feature>
<feature type="strand" evidence="18">
    <location>
        <begin position="237"/>
        <end position="239"/>
    </location>
</feature>
<feature type="helix" evidence="18">
    <location>
        <begin position="254"/>
        <end position="256"/>
    </location>
</feature>
<feature type="helix" evidence="18">
    <location>
        <begin position="266"/>
        <end position="269"/>
    </location>
</feature>
<feature type="strand" evidence="18">
    <location>
        <begin position="274"/>
        <end position="279"/>
    </location>
</feature>
<feature type="strand" evidence="18">
    <location>
        <begin position="286"/>
        <end position="294"/>
    </location>
</feature>
<feature type="helix" evidence="18">
    <location>
        <begin position="295"/>
        <end position="305"/>
    </location>
</feature>
<feature type="helix" evidence="18">
    <location>
        <begin position="310"/>
        <end position="312"/>
    </location>
</feature>
<feature type="turn" evidence="18">
    <location>
        <begin position="314"/>
        <end position="316"/>
    </location>
</feature>
<feature type="helix" evidence="18">
    <location>
        <begin position="317"/>
        <end position="321"/>
    </location>
</feature>
<feature type="strand" evidence="18">
    <location>
        <begin position="323"/>
        <end position="327"/>
    </location>
</feature>
<feature type="strand" evidence="18">
    <location>
        <begin position="329"/>
        <end position="335"/>
    </location>
</feature>
<feature type="strand" evidence="18">
    <location>
        <begin position="344"/>
        <end position="351"/>
    </location>
</feature>
<feature type="helix" evidence="18">
    <location>
        <begin position="353"/>
        <end position="355"/>
    </location>
</feature>
<feature type="helix" evidence="18">
    <location>
        <begin position="359"/>
        <end position="362"/>
    </location>
</feature>
<feature type="helix" evidence="18">
    <location>
        <begin position="365"/>
        <end position="370"/>
    </location>
</feature>
<feature type="strand" evidence="18">
    <location>
        <begin position="374"/>
        <end position="377"/>
    </location>
</feature>
<feature type="turn" evidence="18">
    <location>
        <begin position="378"/>
        <end position="381"/>
    </location>
</feature>
<feature type="strand" evidence="18">
    <location>
        <begin position="384"/>
        <end position="388"/>
    </location>
</feature>
<feature type="strand" evidence="18">
    <location>
        <begin position="393"/>
        <end position="395"/>
    </location>
</feature>
<feature type="strand" evidence="18">
    <location>
        <begin position="397"/>
        <end position="400"/>
    </location>
</feature>
<feature type="turn" evidence="18">
    <location>
        <begin position="407"/>
        <end position="410"/>
    </location>
</feature>
<feature type="strand" evidence="18">
    <location>
        <begin position="413"/>
        <end position="419"/>
    </location>
</feature>
<feature type="strand" evidence="18">
    <location>
        <begin position="434"/>
        <end position="440"/>
    </location>
</feature>
<feature type="strand" evidence="18">
    <location>
        <begin position="443"/>
        <end position="447"/>
    </location>
</feature>
<feature type="turn" evidence="18">
    <location>
        <begin position="452"/>
        <end position="454"/>
    </location>
</feature>
<feature type="strand" evidence="18">
    <location>
        <begin position="519"/>
        <end position="523"/>
    </location>
</feature>
<feature type="helix" evidence="18">
    <location>
        <begin position="530"/>
        <end position="532"/>
    </location>
</feature>
<feature type="helix" evidence="18">
    <location>
        <begin position="540"/>
        <end position="544"/>
    </location>
</feature>
<feature type="strand" evidence="18">
    <location>
        <begin position="548"/>
        <end position="554"/>
    </location>
</feature>
<feature type="strand" evidence="18">
    <location>
        <begin position="564"/>
        <end position="566"/>
    </location>
</feature>
<feature type="strand" evidence="18">
    <location>
        <begin position="569"/>
        <end position="572"/>
    </location>
</feature>
<feature type="strand" evidence="18">
    <location>
        <begin position="582"/>
        <end position="584"/>
    </location>
</feature>
<feature type="helix" evidence="18">
    <location>
        <begin position="591"/>
        <end position="596"/>
    </location>
</feature>
<feature type="strand" evidence="18">
    <location>
        <begin position="599"/>
        <end position="604"/>
    </location>
</feature>
<feature type="strand" evidence="18">
    <location>
        <begin position="606"/>
        <end position="612"/>
    </location>
</feature>
<feature type="strand" evidence="18">
    <location>
        <begin position="620"/>
        <end position="623"/>
    </location>
</feature>
<feature type="strand" evidence="18">
    <location>
        <begin position="626"/>
        <end position="628"/>
    </location>
</feature>
<feature type="turn" evidence="18">
    <location>
        <begin position="632"/>
        <end position="635"/>
    </location>
</feature>
<feature type="helix" evidence="18">
    <location>
        <begin position="640"/>
        <end position="645"/>
    </location>
</feature>
<feature type="strand" evidence="18">
    <location>
        <begin position="650"/>
        <end position="656"/>
    </location>
</feature>
<feature type="strand" evidence="18">
    <location>
        <begin position="658"/>
        <end position="663"/>
    </location>
</feature>
<feature type="strand" evidence="18">
    <location>
        <begin position="668"/>
        <end position="671"/>
    </location>
</feature>
<feature type="strand" evidence="18">
    <location>
        <begin position="681"/>
        <end position="683"/>
    </location>
</feature>
<feature type="strand" evidence="18">
    <location>
        <begin position="688"/>
        <end position="691"/>
    </location>
</feature>
<feature type="strand" evidence="18">
    <location>
        <begin position="693"/>
        <end position="697"/>
    </location>
</feature>
<feature type="strand" evidence="18">
    <location>
        <begin position="710"/>
        <end position="717"/>
    </location>
</feature>
<feature type="strand" evidence="18">
    <location>
        <begin position="730"/>
        <end position="733"/>
    </location>
</feature>
<feature type="helix" evidence="18">
    <location>
        <begin position="734"/>
        <end position="736"/>
    </location>
</feature>
<feature type="strand" evidence="18">
    <location>
        <begin position="744"/>
        <end position="747"/>
    </location>
</feature>
<feature type="strand" evidence="17">
    <location>
        <begin position="757"/>
        <end position="759"/>
    </location>
</feature>
<feature type="turn" evidence="17">
    <location>
        <begin position="762"/>
        <end position="764"/>
    </location>
</feature>
<feature type="helix" evidence="17">
    <location>
        <begin position="765"/>
        <end position="767"/>
    </location>
</feature>
<feature type="strand" evidence="17">
    <location>
        <begin position="771"/>
        <end position="777"/>
    </location>
</feature>
<feature type="strand" evidence="17">
    <location>
        <begin position="793"/>
        <end position="800"/>
    </location>
</feature>
<feature type="helix" evidence="17">
    <location>
        <begin position="802"/>
        <end position="804"/>
    </location>
</feature>
<feature type="strand" evidence="17">
    <location>
        <begin position="807"/>
        <end position="811"/>
    </location>
</feature>
<feature type="strand" evidence="17">
    <location>
        <begin position="814"/>
        <end position="819"/>
    </location>
</feature>
<feature type="strand" evidence="17">
    <location>
        <begin position="821"/>
        <end position="832"/>
    </location>
</feature>
<feature type="helix" evidence="17">
    <location>
        <begin position="833"/>
        <end position="844"/>
    </location>
</feature>
<feature type="helix" evidence="17">
    <location>
        <begin position="852"/>
        <end position="855"/>
    </location>
</feature>
<feature type="helix" evidence="17">
    <location>
        <begin position="861"/>
        <end position="863"/>
    </location>
</feature>
<feature type="strand" evidence="17">
    <location>
        <begin position="871"/>
        <end position="873"/>
    </location>
</feature>
<feature type="strand" evidence="17">
    <location>
        <begin position="876"/>
        <end position="882"/>
    </location>
</feature>
<feature type="strand" evidence="17">
    <location>
        <begin position="888"/>
        <end position="891"/>
    </location>
</feature>
<feature type="strand" evidence="17">
    <location>
        <begin position="894"/>
        <end position="896"/>
    </location>
</feature>
<evidence type="ECO:0000250" key="1">
    <source>
        <dbReference type="UniProtKB" id="Q6UP17"/>
    </source>
</evidence>
<evidence type="ECO:0000255" key="2">
    <source>
        <dbReference type="PROSITE-ProRule" id="PRU00539"/>
    </source>
</evidence>
<evidence type="ECO:0000255" key="3">
    <source>
        <dbReference type="PROSITE-ProRule" id="PRU00551"/>
    </source>
</evidence>
<evidence type="ECO:0000255" key="4">
    <source>
        <dbReference type="PROSITE-ProRule" id="PRU01222"/>
    </source>
</evidence>
<evidence type="ECO:0000256" key="5">
    <source>
        <dbReference type="SAM" id="MobiDB-lite"/>
    </source>
</evidence>
<evidence type="ECO:0000269" key="6">
    <source>
    </source>
</evidence>
<evidence type="ECO:0000269" key="7">
    <source>
    </source>
</evidence>
<evidence type="ECO:0000269" key="8">
    <source>
    </source>
</evidence>
<evidence type="ECO:0000269" key="9">
    <source>
    </source>
</evidence>
<evidence type="ECO:0000303" key="10">
    <source>
    </source>
</evidence>
<evidence type="ECO:0000305" key="11"/>
<evidence type="ECO:0000305" key="12">
    <source>
    </source>
</evidence>
<evidence type="ECO:0007744" key="13">
    <source>
        <dbReference type="PDB" id="5G51"/>
    </source>
</evidence>
<evidence type="ECO:0007744" key="14">
    <source>
        <dbReference type="PDB" id="5G52"/>
    </source>
</evidence>
<evidence type="ECO:0007744" key="15">
    <source>
        <dbReference type="PDB" id="5L7Q"/>
    </source>
</evidence>
<evidence type="ECO:0007744" key="16">
    <source>
        <dbReference type="PDB" id="5L8Q"/>
    </source>
</evidence>
<evidence type="ECO:0007829" key="17">
    <source>
        <dbReference type="PDB" id="5G51"/>
    </source>
</evidence>
<evidence type="ECO:0007829" key="18">
    <source>
        <dbReference type="PDB" id="5L7Q"/>
    </source>
</evidence>
<organism>
    <name type="scientific">Deformed wing virus</name>
    <name type="common">DWV</name>
    <dbReference type="NCBI Taxonomy" id="198112"/>
    <lineage>
        <taxon>Viruses</taxon>
        <taxon>Riboviria</taxon>
        <taxon>Orthornavirae</taxon>
        <taxon>Pisuviricota</taxon>
        <taxon>Pisoniviricetes</taxon>
        <taxon>Picornavirales</taxon>
        <taxon>Iflaviridae</taxon>
        <taxon>Iflavirus</taxon>
        <taxon>Iflavirus aladeformis</taxon>
    </lineage>
</organism>
<reference key="1">
    <citation type="journal article" date="2006" name="J. Virol.">
        <title>Molecular and biological characterization of deformed wing virus of honeybees (Apis mellifera L.).</title>
        <authorList>
            <person name="Lanzi G."/>
            <person name="de Miranda J.R."/>
            <person name="Boniotti M.B."/>
            <person name="Cameron C.E."/>
            <person name="Lavazza A."/>
            <person name="Capucci L."/>
            <person name="Camazine S.M."/>
            <person name="Rossi C."/>
        </authorList>
    </citation>
    <scope>NUCLEOTIDE SEQUENCE [LARGE SCALE GENOMIC DNA]</scope>
    <scope>PROTEIN SEQUENCE OF 486-497 AND 902-913</scope>
    <scope>PROTEOLYTIC CLEAVAGE (GENOME POLYPROTEIN)</scope>
    <source>
        <strain>DWV-it</strain>
    </source>
</reference>
<reference key="2">
    <citation type="journal article" date="2008" name="J. Gen. Virol.">
        <title>Occurrence, function and evolutionary origins of '2A-like' sequences in virus genomes.</title>
        <authorList>
            <person name="Luke G.A."/>
            <person name="de Felipe P."/>
            <person name="Lukashev A."/>
            <person name="Kallioinen S.E."/>
            <person name="Bruno E.A."/>
            <person name="Ryan M.D."/>
        </authorList>
    </citation>
    <scope>IDENTIFICATION (PROTEIN 2A-LIKE)</scope>
</reference>
<reference key="3">
    <citation type="journal article" date="2022" name="Microbiol. Spectr.">
        <title>DWV 3C Protease Uncovers the Diverse Catalytic Triad in Insect RNA Viruses.</title>
        <authorList>
            <person name="Yuan X."/>
            <person name="Kadowaki T."/>
        </authorList>
    </citation>
    <scope>FUNCTION (3C-LIKE PROTEASE)</scope>
    <scope>ACTIVITY REGULATION (3C-LIKE PROTEASE)</scope>
    <scope>PROTEOLYTIC CLEAVAGE (GENOME POLYPROTEIN)</scope>
    <scope>BIOPHYSICOCHEMICAL PROPERTIES (3C-LIKE PROTEASE)</scope>
    <scope>MUTAGENESIS OF HIS-2170; HIS-2190; ASN-2227 AND CYS-2307</scope>
</reference>
<reference key="4">
    <citation type="journal article" date="2023" name="Viruses">
        <title>Processing of the 3C/D Region of the Deformed Wing Virus (DWV).</title>
        <authorList>
            <person name="Reuscher C.M."/>
            <person name="Barth S."/>
            <person name="Gockel F."/>
            <person name="Netsch A."/>
            <person name="Seitz K."/>
            <person name="Ruemenapf T."/>
            <person name="Lamp B."/>
        </authorList>
    </citation>
    <scope>PROTEOLYTIC CLEAVAGE (GENOME POLYPROTEIN)</scope>
    <scope>MUTAGENESIS OF GLN-2118; CYS-2307 AND GLN-2393</scope>
    <scope>ACTIVE SITE (3C-LIKE PROTEASE)</scope>
    <source>
        <strain>DWV-A</strain>
    </source>
</reference>
<reference evidence="13 14 15 16" key="5">
    <citation type="journal article" date="2017" name="Proc. Natl. Acad. Sci. U.S.A.">
        <title>Structure of deformed wing virus, a major honey bee pathogen.</title>
        <authorList>
            <person name="Skubnik K."/>
            <person name="Novacek J."/>
            <person name="Fuzik T."/>
            <person name="Pridal A."/>
            <person name="Paxton R.J."/>
            <person name="Plevka P."/>
        </authorList>
    </citation>
    <scope>X-RAY CRYSTALLOGRAPHY (3.80 ANGSTROMS) OF 212-461 AND 487-1154</scope>
    <scope>STRUCTURE BY ELECTRON MICROSCOPY (3.20 ANGSTROMS) OF 212-464 AND 486-901</scope>
    <scope>FUNCTION (CAPSID PROTEIN VP1)</scope>
    <scope>FUNCTION (CAPSID PROTEIN VP2)</scope>
    <scope>FUNCTION (CAPSID PROTEIN VP3)</scope>
    <scope>SUBCELLULAR LOCATION (CAPSID PROTEIN VP1)</scope>
    <scope>SUBCELLULAR LOCATION (CAPSID PROTEIN VP2)</scope>
    <scope>SUBCELLULAR LOCATION (CAPSID PROTEIN VP3)</scope>
    <scope>DOMAIN (CAPSID PROTEIN VP3)</scope>
</reference>
<dbReference type="EC" id="3.6.4.13"/>
<dbReference type="EC" id="3.4.22.-" evidence="4"/>
<dbReference type="EC" id="2.7.7.48" evidence="2"/>
<dbReference type="EMBL" id="AJ489744">
    <property type="protein sequence ID" value="CAD34006.2"/>
    <property type="molecule type" value="Genomic_RNA"/>
</dbReference>
<dbReference type="RefSeq" id="NP_853560.2">
    <property type="nucleotide sequence ID" value="NC_004830.2"/>
</dbReference>
<dbReference type="PDB" id="5G51">
    <property type="method" value="X-ray"/>
    <property type="resolution" value="1.45 A"/>
    <property type="chains" value="A=745-901"/>
</dbReference>
<dbReference type="PDB" id="5G52">
    <property type="method" value="X-ray"/>
    <property type="resolution" value="3.80 A"/>
    <property type="chains" value="A=902-1154, B=212-461, C=487-883"/>
</dbReference>
<dbReference type="PDB" id="5L7Q">
    <property type="method" value="EM"/>
    <property type="resolution" value="3.44 A"/>
    <property type="chains" value="B=212-464, C=486-901"/>
</dbReference>
<dbReference type="PDB" id="5L8Q">
    <property type="method" value="EM"/>
    <property type="resolution" value="3.20 A"/>
    <property type="chains" value="B=212-464, C=486-901"/>
</dbReference>
<dbReference type="PDBsum" id="5G51"/>
<dbReference type="PDBsum" id="5G52"/>
<dbReference type="PDBsum" id="5L7Q"/>
<dbReference type="PDBsum" id="5L8Q"/>
<dbReference type="SMR" id="Q8B3M2"/>
<dbReference type="GeneID" id="1733515"/>
<dbReference type="KEGG" id="vg:1733515"/>
<dbReference type="Proteomes" id="UP000202094">
    <property type="component" value="Genome"/>
</dbReference>
<dbReference type="GO" id="GO:0019028">
    <property type="term" value="C:viral capsid"/>
    <property type="evidence" value="ECO:0007669"/>
    <property type="project" value="UniProtKB-KW"/>
</dbReference>
<dbReference type="GO" id="GO:0005524">
    <property type="term" value="F:ATP binding"/>
    <property type="evidence" value="ECO:0007669"/>
    <property type="project" value="UniProtKB-KW"/>
</dbReference>
<dbReference type="GO" id="GO:0004197">
    <property type="term" value="F:cysteine-type endopeptidase activity"/>
    <property type="evidence" value="ECO:0007669"/>
    <property type="project" value="InterPro"/>
</dbReference>
<dbReference type="GO" id="GO:0003723">
    <property type="term" value="F:RNA binding"/>
    <property type="evidence" value="ECO:0007669"/>
    <property type="project" value="InterPro"/>
</dbReference>
<dbReference type="GO" id="GO:0003724">
    <property type="term" value="F:RNA helicase activity"/>
    <property type="evidence" value="ECO:0007669"/>
    <property type="project" value="InterPro"/>
</dbReference>
<dbReference type="GO" id="GO:0003968">
    <property type="term" value="F:RNA-directed RNA polymerase activity"/>
    <property type="evidence" value="ECO:0007669"/>
    <property type="project" value="UniProtKB-KW"/>
</dbReference>
<dbReference type="GO" id="GO:0005198">
    <property type="term" value="F:structural molecule activity"/>
    <property type="evidence" value="ECO:0007669"/>
    <property type="project" value="InterPro"/>
</dbReference>
<dbReference type="GO" id="GO:0006351">
    <property type="term" value="P:DNA-templated transcription"/>
    <property type="evidence" value="ECO:0007669"/>
    <property type="project" value="InterPro"/>
</dbReference>
<dbReference type="GO" id="GO:0006508">
    <property type="term" value="P:proteolysis"/>
    <property type="evidence" value="ECO:0007669"/>
    <property type="project" value="UniProtKB-KW"/>
</dbReference>
<dbReference type="GO" id="GO:0039694">
    <property type="term" value="P:viral RNA genome replication"/>
    <property type="evidence" value="ECO:0007669"/>
    <property type="project" value="InterPro"/>
</dbReference>
<dbReference type="CDD" id="cd23169">
    <property type="entry name" value="ps-ssRNAv-Picornavirales"/>
    <property type="match status" value="1"/>
</dbReference>
<dbReference type="CDD" id="cd00205">
    <property type="entry name" value="rhv_like"/>
    <property type="match status" value="2"/>
</dbReference>
<dbReference type="Gene3D" id="2.60.120.20">
    <property type="match status" value="3"/>
</dbReference>
<dbReference type="Gene3D" id="3.30.70.270">
    <property type="match status" value="1"/>
</dbReference>
<dbReference type="Gene3D" id="2.40.10.10">
    <property type="entry name" value="Trypsin-like serine proteases"/>
    <property type="match status" value="1"/>
</dbReference>
<dbReference type="InterPro" id="IPR014872">
    <property type="entry name" value="Dicistrovirus_capsid-polyPr_C"/>
</dbReference>
<dbReference type="InterPro" id="IPR043502">
    <property type="entry name" value="DNA/RNA_pol_sf"/>
</dbReference>
<dbReference type="InterPro" id="IPR000605">
    <property type="entry name" value="Helicase_SF3_ssDNA/RNA_vir"/>
</dbReference>
<dbReference type="InterPro" id="IPR014759">
    <property type="entry name" value="Helicase_SF3_ssRNA_vir"/>
</dbReference>
<dbReference type="InterPro" id="IPR027417">
    <property type="entry name" value="P-loop_NTPase"/>
</dbReference>
<dbReference type="InterPro" id="IPR044067">
    <property type="entry name" value="PCV_3C_PRO"/>
</dbReference>
<dbReference type="InterPro" id="IPR009003">
    <property type="entry name" value="Peptidase_S1_PA"/>
</dbReference>
<dbReference type="InterPro" id="IPR043504">
    <property type="entry name" value="Peptidase_S1_PA_chymotrypsin"/>
</dbReference>
<dbReference type="InterPro" id="IPR001676">
    <property type="entry name" value="Picornavirus_capsid"/>
</dbReference>
<dbReference type="InterPro" id="IPR043128">
    <property type="entry name" value="Rev_trsase/Diguanyl_cyclase"/>
</dbReference>
<dbReference type="InterPro" id="IPR033703">
    <property type="entry name" value="Rhv-like"/>
</dbReference>
<dbReference type="InterPro" id="IPR001205">
    <property type="entry name" value="RNA-dir_pol_C"/>
</dbReference>
<dbReference type="InterPro" id="IPR007094">
    <property type="entry name" value="RNA-dir_pol_PSvirus"/>
</dbReference>
<dbReference type="InterPro" id="IPR029053">
    <property type="entry name" value="Viral_coat"/>
</dbReference>
<dbReference type="Pfam" id="PF08762">
    <property type="entry name" value="CRPV_capsid"/>
    <property type="match status" value="1"/>
</dbReference>
<dbReference type="Pfam" id="PF00680">
    <property type="entry name" value="RdRP_1"/>
    <property type="match status" value="1"/>
</dbReference>
<dbReference type="Pfam" id="PF00073">
    <property type="entry name" value="Rhv"/>
    <property type="match status" value="2"/>
</dbReference>
<dbReference type="Pfam" id="PF00910">
    <property type="entry name" value="RNA_helicase"/>
    <property type="match status" value="1"/>
</dbReference>
<dbReference type="SUPFAM" id="SSF56672">
    <property type="entry name" value="DNA/RNA polymerases"/>
    <property type="match status" value="1"/>
</dbReference>
<dbReference type="SUPFAM" id="SSF52540">
    <property type="entry name" value="P-loop containing nucleoside triphosphate hydrolases"/>
    <property type="match status" value="1"/>
</dbReference>
<dbReference type="SUPFAM" id="SSF88633">
    <property type="entry name" value="Positive stranded ssRNA viruses"/>
    <property type="match status" value="3"/>
</dbReference>
<dbReference type="SUPFAM" id="SSF50494">
    <property type="entry name" value="Trypsin-like serine proteases"/>
    <property type="match status" value="1"/>
</dbReference>
<dbReference type="PROSITE" id="PS51874">
    <property type="entry name" value="PCV_3C_PRO"/>
    <property type="match status" value="1"/>
</dbReference>
<dbReference type="PROSITE" id="PS50507">
    <property type="entry name" value="RDRP_SSRNA_POS"/>
    <property type="match status" value="1"/>
</dbReference>
<dbReference type="PROSITE" id="PS51218">
    <property type="entry name" value="SF3_HELICASE_2"/>
    <property type="match status" value="1"/>
</dbReference>
<proteinExistence type="evidence at protein level"/>
<organismHost>
    <name type="scientific">Apis mellifera</name>
    <name type="common">Honeybee</name>
    <dbReference type="NCBI Taxonomy" id="7460"/>
</organismHost>
<organismHost>
    <name type="scientific">Varroa destructor</name>
    <name type="common">Honeybee mite</name>
    <dbReference type="NCBI Taxonomy" id="109461"/>
</organismHost>
<keyword id="KW-0002">3D-structure</keyword>
<keyword id="KW-0067">ATP-binding</keyword>
<keyword id="KW-0167">Capsid protein</keyword>
<keyword id="KW-0903">Direct protein sequencing</keyword>
<keyword id="KW-0347">Helicase</keyword>
<keyword id="KW-0378">Hydrolase</keyword>
<keyword id="KW-0547">Nucleotide-binding</keyword>
<keyword id="KW-0548">Nucleotidyltransferase</keyword>
<keyword id="KW-0645">Protease</keyword>
<keyword id="KW-0696">RNA-directed RNA polymerase</keyword>
<keyword id="KW-0788">Thiol protease</keyword>
<keyword id="KW-0808">Transferase</keyword>
<keyword id="KW-0693">Viral RNA replication</keyword>
<keyword id="KW-0946">Virion</keyword>